<accession>Q5JZQ8</accession>
<name>CLN6_CANLF</name>
<keyword id="KW-0256">Endoplasmic reticulum</keyword>
<keyword id="KW-0472">Membrane</keyword>
<keyword id="KW-1185">Reference proteome</keyword>
<keyword id="KW-0812">Transmembrane</keyword>
<keyword id="KW-1133">Transmembrane helix</keyword>
<protein>
    <recommendedName>
        <fullName>Ceroid-lipofuscinosis neuronal protein 6 homolog</fullName>
        <shortName>Protein CLN6</shortName>
    </recommendedName>
</protein>
<gene>
    <name type="primary">CLN6</name>
</gene>
<proteinExistence type="evidence at transcript level"/>
<sequence>MEAAARRRQHPGAAGGAGAQPGASFLQARHSSGKADEAVGTAPFHLDLWFYFTLQNWVLDFGRPIAMLVFPLEWFPLNKPSVGDYFHMAYNIITPFLLLKLIERSPRTLPRSVIYVSIITFVMGASIHLVGDSVNHRLLFSGYQHHLSVRENPIIKNLSPETLIDSFELLYYYDEYLGHCMWYVPFFLILFIYFSGCFTPTKAESSMPGAALLLAMPSGLYYWYLVTEGQIFILFIFTFFAMLALVLHQKRKRLFLDSNGLFLFYSFALTLLLVALWVAWLWNDPVLRKKYPGVIYVPEPWAFYTLHVSSRP</sequence>
<organism>
    <name type="scientific">Canis lupus familiaris</name>
    <name type="common">Dog</name>
    <name type="synonym">Canis familiaris</name>
    <dbReference type="NCBI Taxonomy" id="9615"/>
    <lineage>
        <taxon>Eukaryota</taxon>
        <taxon>Metazoa</taxon>
        <taxon>Chordata</taxon>
        <taxon>Craniata</taxon>
        <taxon>Vertebrata</taxon>
        <taxon>Euteleostomi</taxon>
        <taxon>Mammalia</taxon>
        <taxon>Eutheria</taxon>
        <taxon>Laurasiatheria</taxon>
        <taxon>Carnivora</taxon>
        <taxon>Caniformia</taxon>
        <taxon>Canidae</taxon>
        <taxon>Canis</taxon>
    </lineage>
</organism>
<feature type="chain" id="PRO_0000089861" description="Ceroid-lipofuscinosis neuronal protein 6 homolog">
    <location>
        <begin position="1"/>
        <end position="312"/>
    </location>
</feature>
<feature type="transmembrane region" description="Helical" evidence="2">
    <location>
        <begin position="57"/>
        <end position="77"/>
    </location>
</feature>
<feature type="transmembrane region" description="Helical" evidence="2">
    <location>
        <begin position="82"/>
        <end position="102"/>
    </location>
</feature>
<feature type="transmembrane region" description="Helical" evidence="2">
    <location>
        <begin position="112"/>
        <end position="132"/>
    </location>
</feature>
<feature type="transmembrane region" description="Helical" evidence="2">
    <location>
        <begin position="178"/>
        <end position="198"/>
    </location>
</feature>
<feature type="transmembrane region" description="Helical" evidence="2">
    <location>
        <begin position="205"/>
        <end position="225"/>
    </location>
</feature>
<feature type="transmembrane region" description="Helical" evidence="2">
    <location>
        <begin position="226"/>
        <end position="246"/>
    </location>
</feature>
<feature type="transmembrane region" description="Helical" evidence="2">
    <location>
        <begin position="261"/>
        <end position="281"/>
    </location>
</feature>
<feature type="region of interest" description="Disordered" evidence="3">
    <location>
        <begin position="1"/>
        <end position="22"/>
    </location>
</feature>
<feature type="compositionally biased region" description="Basic residues" evidence="3">
    <location>
        <begin position="1"/>
        <end position="10"/>
    </location>
</feature>
<reference key="1">
    <citation type="submission" date="2005-01" db="EMBL/GenBank/DDBJ databases">
        <title>Characterization of candidate genes for neuronal ceroid lipofuscinosis in Tibetan terrier dogs.</title>
        <authorList>
            <person name="Droegemueller C."/>
            <person name="Woehlke A."/>
            <person name="Distl O."/>
        </authorList>
    </citation>
    <scope>NUCLEOTIDE SEQUENCE [MRNA]</scope>
</reference>
<evidence type="ECO:0000250" key="1">
    <source>
        <dbReference type="UniProtKB" id="Q9NWW5"/>
    </source>
</evidence>
<evidence type="ECO:0000255" key="2"/>
<evidence type="ECO:0000256" key="3">
    <source>
        <dbReference type="SAM" id="MobiDB-lite"/>
    </source>
</evidence>
<dbReference type="EMBL" id="AJ875418">
    <property type="protein sequence ID" value="CAI44939.1"/>
    <property type="molecule type" value="mRNA"/>
</dbReference>
<dbReference type="RefSeq" id="NP_001011888.1">
    <property type="nucleotide sequence ID" value="NM_001011888.1"/>
</dbReference>
<dbReference type="RefSeq" id="XP_038298694.1">
    <property type="nucleotide sequence ID" value="XM_038442766.1"/>
</dbReference>
<dbReference type="RefSeq" id="XP_038317447.1">
    <property type="nucleotide sequence ID" value="XM_038461519.1"/>
</dbReference>
<dbReference type="RefSeq" id="XP_038436739.1">
    <property type="nucleotide sequence ID" value="XM_038580811.1"/>
</dbReference>
<dbReference type="FunCoup" id="Q5JZQ8">
    <property type="interactions" value="204"/>
</dbReference>
<dbReference type="STRING" id="9615.ENSCAFP00000025751"/>
<dbReference type="PaxDb" id="9612-ENSCAFP00000025751"/>
<dbReference type="Ensembl" id="ENSCAFT00000027690.4">
    <property type="protein sequence ID" value="ENSCAFP00000025751.4"/>
    <property type="gene ID" value="ENSCAFG00000017473.5"/>
</dbReference>
<dbReference type="Ensembl" id="ENSCAFT00030019914.1">
    <property type="protein sequence ID" value="ENSCAFP00030017357.1"/>
    <property type="gene ID" value="ENSCAFG00030010614.1"/>
</dbReference>
<dbReference type="Ensembl" id="ENSCAFT00040048353.1">
    <property type="protein sequence ID" value="ENSCAFP00040042233.1"/>
    <property type="gene ID" value="ENSCAFG00040025859.1"/>
</dbReference>
<dbReference type="Ensembl" id="ENSCAFT00845033654.1">
    <property type="protein sequence ID" value="ENSCAFP00845026347.1"/>
    <property type="gene ID" value="ENSCAFG00845018935.1"/>
</dbReference>
<dbReference type="GeneID" id="497068"/>
<dbReference type="VEuPathDB" id="HostDB:ENSCAFG00845018935"/>
<dbReference type="VGNC" id="VGNC:39351">
    <property type="gene designation" value="CLN6"/>
</dbReference>
<dbReference type="eggNOG" id="ENOG502QSUV">
    <property type="taxonomic scope" value="Eukaryota"/>
</dbReference>
<dbReference type="GeneTree" id="ENSGT00400000022240"/>
<dbReference type="InParanoid" id="Q5JZQ8"/>
<dbReference type="OrthoDB" id="9970199at2759"/>
<dbReference type="Proteomes" id="UP000002254">
    <property type="component" value="Chromosome 30"/>
</dbReference>
<dbReference type="Proteomes" id="UP000694429">
    <property type="component" value="Chromosome 30"/>
</dbReference>
<dbReference type="Proteomes" id="UP000694542">
    <property type="component" value="Chromosome 30"/>
</dbReference>
<dbReference type="Proteomes" id="UP000805418">
    <property type="component" value="Chromosome 30"/>
</dbReference>
<dbReference type="GO" id="GO:0005769">
    <property type="term" value="C:early endosome"/>
    <property type="evidence" value="ECO:0000250"/>
    <property type="project" value="UniProtKB"/>
</dbReference>
<dbReference type="GO" id="GO:0005783">
    <property type="term" value="C:endoplasmic reticulum"/>
    <property type="evidence" value="ECO:0000250"/>
    <property type="project" value="UniProtKB"/>
</dbReference>
<dbReference type="GO" id="GO:0005788">
    <property type="term" value="C:endoplasmic reticulum lumen"/>
    <property type="evidence" value="ECO:0000250"/>
    <property type="project" value="UniProtKB"/>
</dbReference>
<dbReference type="GO" id="GO:0005789">
    <property type="term" value="C:endoplasmic reticulum membrane"/>
    <property type="evidence" value="ECO:0007669"/>
    <property type="project" value="UniProtKB-SubCell"/>
</dbReference>
<dbReference type="GO" id="GO:0045121">
    <property type="term" value="C:membrane raft"/>
    <property type="evidence" value="ECO:0000250"/>
    <property type="project" value="UniProtKB"/>
</dbReference>
<dbReference type="GO" id="GO:0005730">
    <property type="term" value="C:nucleolus"/>
    <property type="evidence" value="ECO:0007669"/>
    <property type="project" value="Ensembl"/>
</dbReference>
<dbReference type="GO" id="GO:0035727">
    <property type="term" value="F:lysophosphatidic acid binding"/>
    <property type="evidence" value="ECO:0000250"/>
    <property type="project" value="UniProtKB"/>
</dbReference>
<dbReference type="GO" id="GO:0042803">
    <property type="term" value="F:protein homodimerization activity"/>
    <property type="evidence" value="ECO:0000250"/>
    <property type="project" value="UniProtKB"/>
</dbReference>
<dbReference type="GO" id="GO:0120146">
    <property type="term" value="F:sulfatide binding"/>
    <property type="evidence" value="ECO:0000250"/>
    <property type="project" value="UniProtKB"/>
</dbReference>
<dbReference type="GO" id="GO:0008203">
    <property type="term" value="P:cholesterol metabolic process"/>
    <property type="evidence" value="ECO:0000250"/>
    <property type="project" value="UniProtKB"/>
</dbReference>
<dbReference type="GO" id="GO:0001573">
    <property type="term" value="P:ganglioside metabolic process"/>
    <property type="evidence" value="ECO:0000250"/>
    <property type="project" value="UniProtKB"/>
</dbReference>
<dbReference type="GO" id="GO:0030203">
    <property type="term" value="P:glycosaminoglycan metabolic process"/>
    <property type="evidence" value="ECO:0000250"/>
    <property type="project" value="UniProtKB"/>
</dbReference>
<dbReference type="GO" id="GO:0031987">
    <property type="term" value="P:locomotion involved in locomotory behavior"/>
    <property type="evidence" value="ECO:0007669"/>
    <property type="project" value="Ensembl"/>
</dbReference>
<dbReference type="GO" id="GO:0007042">
    <property type="term" value="P:lysosomal lumen acidification"/>
    <property type="evidence" value="ECO:0000250"/>
    <property type="project" value="UniProtKB"/>
</dbReference>
<dbReference type="GO" id="GO:0009057">
    <property type="term" value="P:macromolecule catabolic process"/>
    <property type="evidence" value="ECO:0007669"/>
    <property type="project" value="Ensembl"/>
</dbReference>
<dbReference type="GO" id="GO:0045862">
    <property type="term" value="P:positive regulation of proteolysis"/>
    <property type="evidence" value="ECO:0000250"/>
    <property type="project" value="UniProtKB"/>
</dbReference>
<dbReference type="GO" id="GO:0007601">
    <property type="term" value="P:visual perception"/>
    <property type="evidence" value="ECO:0007669"/>
    <property type="project" value="Ensembl"/>
</dbReference>
<dbReference type="InterPro" id="IPR029255">
    <property type="entry name" value="CLN6"/>
</dbReference>
<dbReference type="PANTHER" id="PTHR16244">
    <property type="entry name" value="CEROID-LIPOFUSCINOSIS NEURONAL PROTEIN 6"/>
    <property type="match status" value="1"/>
</dbReference>
<dbReference type="PANTHER" id="PTHR16244:SF2">
    <property type="entry name" value="CEROID-LIPOFUSCINOSIS NEURONAL PROTEIN 6"/>
    <property type="match status" value="1"/>
</dbReference>
<dbReference type="Pfam" id="PF15156">
    <property type="entry name" value="CLN6"/>
    <property type="match status" value="1"/>
</dbReference>
<comment type="subunit">
    <text evidence="1">Interacts with CRMP2. Interacts with CLN5 (By similarity). Interacts with CLN5. Interacts with CLN3 (By similarity).</text>
</comment>
<comment type="subcellular location">
    <subcellularLocation>
        <location evidence="1">Endoplasmic reticulum membrane</location>
        <topology evidence="2">Multi-pass membrane protein</topology>
    </subcellularLocation>
    <subcellularLocation>
        <location evidence="1">Endoplasmic reticulum</location>
    </subcellularLocation>
</comment>